<comment type="catalytic activity">
    <reaction evidence="1">
        <text>L-glutamate 5-semialdehyde + NAD(+) + H2O = L-glutamate + NADH + 2 H(+)</text>
        <dbReference type="Rhea" id="RHEA:30235"/>
        <dbReference type="ChEBI" id="CHEBI:15377"/>
        <dbReference type="ChEBI" id="CHEBI:15378"/>
        <dbReference type="ChEBI" id="CHEBI:29985"/>
        <dbReference type="ChEBI" id="CHEBI:57540"/>
        <dbReference type="ChEBI" id="CHEBI:57945"/>
        <dbReference type="ChEBI" id="CHEBI:58066"/>
        <dbReference type="EC" id="1.2.1.88"/>
    </reaction>
</comment>
<comment type="pathway">
    <text evidence="1">Amino-acid degradation; L-proline degradation into L-glutamate; L-glutamate from L-proline: step 2/2.</text>
</comment>
<comment type="similarity">
    <text evidence="1">Belongs to the aldehyde dehydrogenase family. RocA subfamily.</text>
</comment>
<protein>
    <recommendedName>
        <fullName evidence="1">1-pyrroline-5-carboxylate dehydrogenase</fullName>
        <shortName evidence="1">P5C dehydrogenase</shortName>
        <ecNumber evidence="1">1.2.1.88</ecNumber>
    </recommendedName>
    <alternativeName>
        <fullName evidence="1">L-glutamate gamma-semialdehyde dehydrogenase</fullName>
    </alternativeName>
</protein>
<evidence type="ECO:0000255" key="1">
    <source>
        <dbReference type="HAMAP-Rule" id="MF_00733"/>
    </source>
</evidence>
<name>ROCA_GEOSW</name>
<organism>
    <name type="scientific">Geobacillus sp. (strain WCH70)</name>
    <dbReference type="NCBI Taxonomy" id="471223"/>
    <lineage>
        <taxon>Bacteria</taxon>
        <taxon>Bacillati</taxon>
        <taxon>Bacillota</taxon>
        <taxon>Bacilli</taxon>
        <taxon>Bacillales</taxon>
        <taxon>Anoxybacillaceae</taxon>
        <taxon>Geobacillus</taxon>
    </lineage>
</organism>
<sequence>MVQPYKHEPLTDFTVEANRKAFEEALKKVEAELGKDYPLIIGGERVTTDEKIVSINPANKTEVIGRVSKANKELAEKAMKVADEAFKWWSKTKPEARADILFRAAAIVRRRKHEFSALMVKEAGKPWKEADADTAEAIDFMEYYARQMLKLKDGVPVESRPGETNRFFYIPLGVGVVISPWNFPFAIMAGTTVASLVTGNTVLLKPASATPVVAYKFAEVLEEAGLPAGVLNYIPGSGAEVGDYLVDHPRTRFISFTGSRDVGIRIYERAAKVHPGQIWLKRVIAEMGGKDGIVVDKEADLELAAQSIVASAFGFSGQKCSACSRAIIVEDVYDQVLNRVVELTKQLKVGDPADQSTFMGPVIDQSAYNKIMEYIEIGKKEGRLMTGGEGDDSKGFFIQPTVFADVDPNARIMQEEIFGPVVAFTKAKDFDHALEIANNTEYGLTGAVISRNRANLEKAREEFHVGNLYFNRGCTGAIVGYQPFGGFNMSGTDSKAGGPDYLILHMQAKTVSEMF</sequence>
<feature type="chain" id="PRO_1000212739" description="1-pyrroline-5-carboxylate dehydrogenase">
    <location>
        <begin position="1"/>
        <end position="515"/>
    </location>
</feature>
<feature type="active site" evidence="1">
    <location>
        <position position="286"/>
    </location>
</feature>
<feature type="active site" evidence="1">
    <location>
        <position position="320"/>
    </location>
</feature>
<keyword id="KW-0520">NAD</keyword>
<keyword id="KW-0560">Oxidoreductase</keyword>
<dbReference type="EC" id="1.2.1.88" evidence="1"/>
<dbReference type="EMBL" id="CP001638">
    <property type="protein sequence ID" value="ACS23203.1"/>
    <property type="molecule type" value="Genomic_DNA"/>
</dbReference>
<dbReference type="SMR" id="C5D4J5"/>
<dbReference type="STRING" id="471223.GWCH70_0274"/>
<dbReference type="KEGG" id="gwc:GWCH70_0274"/>
<dbReference type="eggNOG" id="COG1012">
    <property type="taxonomic scope" value="Bacteria"/>
</dbReference>
<dbReference type="HOGENOM" id="CLU_005391_0_0_9"/>
<dbReference type="OrthoDB" id="9762913at2"/>
<dbReference type="UniPathway" id="UPA00261">
    <property type="reaction ID" value="UER00374"/>
</dbReference>
<dbReference type="GO" id="GO:0009898">
    <property type="term" value="C:cytoplasmic side of plasma membrane"/>
    <property type="evidence" value="ECO:0007669"/>
    <property type="project" value="TreeGrafter"/>
</dbReference>
<dbReference type="GO" id="GO:0003842">
    <property type="term" value="F:1-pyrroline-5-carboxylate dehydrogenase activity"/>
    <property type="evidence" value="ECO:0007669"/>
    <property type="project" value="UniProtKB-UniRule"/>
</dbReference>
<dbReference type="GO" id="GO:0006537">
    <property type="term" value="P:glutamate biosynthetic process"/>
    <property type="evidence" value="ECO:0007669"/>
    <property type="project" value="UniProtKB-UniRule"/>
</dbReference>
<dbReference type="GO" id="GO:0010133">
    <property type="term" value="P:proline catabolic process to glutamate"/>
    <property type="evidence" value="ECO:0007669"/>
    <property type="project" value="UniProtKB-UniPathway"/>
</dbReference>
<dbReference type="CDD" id="cd07124">
    <property type="entry name" value="ALDH_PutA-P5CDH-RocA"/>
    <property type="match status" value="1"/>
</dbReference>
<dbReference type="FunFam" id="3.40.309.10:FF:000005">
    <property type="entry name" value="1-pyrroline-5-carboxylate dehydrogenase 1"/>
    <property type="match status" value="1"/>
</dbReference>
<dbReference type="FunFam" id="3.40.605.10:FF:000045">
    <property type="entry name" value="1-pyrroline-5-carboxylate dehydrogenase 1"/>
    <property type="match status" value="1"/>
</dbReference>
<dbReference type="Gene3D" id="3.40.605.10">
    <property type="entry name" value="Aldehyde Dehydrogenase, Chain A, domain 1"/>
    <property type="match status" value="1"/>
</dbReference>
<dbReference type="Gene3D" id="3.40.309.10">
    <property type="entry name" value="Aldehyde Dehydrogenase, Chain A, domain 2"/>
    <property type="match status" value="1"/>
</dbReference>
<dbReference type="HAMAP" id="MF_00733">
    <property type="entry name" value="RocA"/>
    <property type="match status" value="1"/>
</dbReference>
<dbReference type="InterPro" id="IPR016161">
    <property type="entry name" value="Ald_DH/histidinol_DH"/>
</dbReference>
<dbReference type="InterPro" id="IPR016163">
    <property type="entry name" value="Ald_DH_C"/>
</dbReference>
<dbReference type="InterPro" id="IPR016160">
    <property type="entry name" value="Ald_DH_CS_CYS"/>
</dbReference>
<dbReference type="InterPro" id="IPR016162">
    <property type="entry name" value="Ald_DH_N"/>
</dbReference>
<dbReference type="InterPro" id="IPR015590">
    <property type="entry name" value="Aldehyde_DH_dom"/>
</dbReference>
<dbReference type="InterPro" id="IPR050485">
    <property type="entry name" value="Proline_metab_enzyme"/>
</dbReference>
<dbReference type="InterPro" id="IPR005932">
    <property type="entry name" value="RocA"/>
</dbReference>
<dbReference type="InterPro" id="IPR047597">
    <property type="entry name" value="RocA_bacillales"/>
</dbReference>
<dbReference type="NCBIfam" id="TIGR01237">
    <property type="entry name" value="D1pyr5carbox2"/>
    <property type="match status" value="1"/>
</dbReference>
<dbReference type="NCBIfam" id="NF002852">
    <property type="entry name" value="PRK03137.1"/>
    <property type="match status" value="1"/>
</dbReference>
<dbReference type="PANTHER" id="PTHR42862">
    <property type="entry name" value="DELTA-1-PYRROLINE-5-CARBOXYLATE DEHYDROGENASE 1, ISOFORM A-RELATED"/>
    <property type="match status" value="1"/>
</dbReference>
<dbReference type="PANTHER" id="PTHR42862:SF1">
    <property type="entry name" value="DELTA-1-PYRROLINE-5-CARBOXYLATE DEHYDROGENASE 2, ISOFORM A-RELATED"/>
    <property type="match status" value="1"/>
</dbReference>
<dbReference type="Pfam" id="PF00171">
    <property type="entry name" value="Aldedh"/>
    <property type="match status" value="1"/>
</dbReference>
<dbReference type="SUPFAM" id="SSF53720">
    <property type="entry name" value="ALDH-like"/>
    <property type="match status" value="1"/>
</dbReference>
<dbReference type="PROSITE" id="PS00070">
    <property type="entry name" value="ALDEHYDE_DEHYDR_CYS"/>
    <property type="match status" value="1"/>
</dbReference>
<gene>
    <name evidence="1" type="primary">rocA</name>
    <name type="ordered locus">GWCH70_0274</name>
</gene>
<proteinExistence type="inferred from homology"/>
<accession>C5D4J5</accession>
<reference key="1">
    <citation type="submission" date="2009-06" db="EMBL/GenBank/DDBJ databases">
        <title>Complete sequence of chromosome of Geopacillus sp. WCH70.</title>
        <authorList>
            <consortium name="US DOE Joint Genome Institute"/>
            <person name="Lucas S."/>
            <person name="Copeland A."/>
            <person name="Lapidus A."/>
            <person name="Glavina del Rio T."/>
            <person name="Dalin E."/>
            <person name="Tice H."/>
            <person name="Bruce D."/>
            <person name="Goodwin L."/>
            <person name="Pitluck S."/>
            <person name="Chertkov O."/>
            <person name="Brettin T."/>
            <person name="Detter J.C."/>
            <person name="Han C."/>
            <person name="Larimer F."/>
            <person name="Land M."/>
            <person name="Hauser L."/>
            <person name="Kyrpides N."/>
            <person name="Mikhailova N."/>
            <person name="Brumm P."/>
            <person name="Mead D.A."/>
            <person name="Richardson P."/>
        </authorList>
    </citation>
    <scope>NUCLEOTIDE SEQUENCE [LARGE SCALE GENOMIC DNA]</scope>
    <source>
        <strain>WCH70</strain>
    </source>
</reference>